<sequence>MVVSADCRISLSAPSCIRSSSTGLTRHIKLGSFCNGELMGKKLNLSQLPNIRLRSSTNFSQKRILMSLNSVAGESKVQELETEKRDPRTVASIILGGGAGTRLFPLTKRRAKPAVPIGGAYRLIDVPMSNCINSGINKVYILTQYNSASLNRHLARAYNSNGLGFGDGYVEVLAATQTPGESGKRWFQGTADAVRQFHWLFEDARSKDIEDVLILSGDHLYRMDYMDFIQDHRQSGADISISCIPIDDRRASDFGLMKIDDKGRVISFSEKPKGDDLKAMAVDTTILGLSKEEAEKKPYIASMGVYVFKKEILLNLLRWRFPTANDFGSEIIPFSAKEFYVNAYLFNDYWEDIGTIRSFFEANLALTEHPGAFSFYDAAKPIYTSRRNLPPSKIDNSKLIDSIISHGSFLTNCLIEHSIVGIRSRVGSNVQLKDTVMLGADYYETEAEVAALLAEGNVPIGIGENTKIQECIIDKNARVGKNVIIANSEGIQEADRSSDGFYIRSGITVILKNSVIKDGVVI</sequence>
<comment type="function">
    <text>This protein plays a role in synthesis of starch. It catalyzes the synthesis of the activated glycosyl donor, ADP-glucose from Glc-1-P and ATP.</text>
</comment>
<comment type="catalytic activity">
    <reaction>
        <text>alpha-D-glucose 1-phosphate + ATP + H(+) = ADP-alpha-D-glucose + diphosphate</text>
        <dbReference type="Rhea" id="RHEA:12120"/>
        <dbReference type="ChEBI" id="CHEBI:15378"/>
        <dbReference type="ChEBI" id="CHEBI:30616"/>
        <dbReference type="ChEBI" id="CHEBI:33019"/>
        <dbReference type="ChEBI" id="CHEBI:57498"/>
        <dbReference type="ChEBI" id="CHEBI:58601"/>
        <dbReference type="EC" id="2.7.7.27"/>
    </reaction>
</comment>
<comment type="activity regulation">
    <text>Activated by 3'phosphoglycerate, inhibited by orthophosphate. Allosteric regulation.</text>
</comment>
<comment type="pathway">
    <text>Glycan biosynthesis; starch biosynthesis.</text>
</comment>
<comment type="subunit">
    <text>Heterotetramer.</text>
</comment>
<comment type="subcellular location">
    <subcellularLocation>
        <location>Plastid</location>
        <location>Chloroplast</location>
    </subcellularLocation>
</comment>
<comment type="tissue specificity">
    <text>Leaves.</text>
</comment>
<comment type="similarity">
    <text evidence="2">Belongs to the bacterial/plant glucose-1-phosphate adenylyltransferase family.</text>
</comment>
<feature type="transit peptide" description="Chloroplast" evidence="1">
    <location>
        <begin position="1"/>
        <end position="54"/>
    </location>
</feature>
<feature type="chain" id="PRO_0000011159" description="Glucose-1-phosphate adenylyltransferase large subunit 1, chloroplastic">
    <location>
        <begin position="55"/>
        <end position="522"/>
    </location>
</feature>
<feature type="modified residue" description="Phosphoserine" evidence="3">
    <location>
        <position position="428"/>
    </location>
</feature>
<feature type="sequence conflict" description="In Ref. 2; BAA76362." evidence="2" ref="2">
    <original>Q</original>
    <variation>R</variation>
    <location>
        <position position="196"/>
    </location>
</feature>
<proteinExistence type="evidence at protein level"/>
<protein>
    <recommendedName>
        <fullName>Glucose-1-phosphate adenylyltransferase large subunit 1, chloroplastic</fullName>
        <ecNumber>2.7.7.27</ecNumber>
    </recommendedName>
    <alternativeName>
        <fullName>ADP-glucose pyrophosphorylase</fullName>
    </alternativeName>
    <alternativeName>
        <fullName>ADP-glucose synthase</fullName>
    </alternativeName>
    <alternativeName>
        <fullName>AGPase S</fullName>
    </alternativeName>
    <alternativeName>
        <fullName>Alpha-D-glucose-1-phosphate adenyl transferase</fullName>
    </alternativeName>
</protein>
<organism>
    <name type="scientific">Arabidopsis thaliana</name>
    <name type="common">Mouse-ear cress</name>
    <dbReference type="NCBI Taxonomy" id="3702"/>
    <lineage>
        <taxon>Eukaryota</taxon>
        <taxon>Viridiplantae</taxon>
        <taxon>Streptophyta</taxon>
        <taxon>Embryophyta</taxon>
        <taxon>Tracheophyta</taxon>
        <taxon>Spermatophyta</taxon>
        <taxon>Magnoliopsida</taxon>
        <taxon>eudicotyledons</taxon>
        <taxon>Gunneridae</taxon>
        <taxon>Pentapetalae</taxon>
        <taxon>rosids</taxon>
        <taxon>malvids</taxon>
        <taxon>Brassicales</taxon>
        <taxon>Brassicaceae</taxon>
        <taxon>Camelineae</taxon>
        <taxon>Arabidopsis</taxon>
    </lineage>
</organism>
<name>GLGL1_ARATH</name>
<gene>
    <name type="primary">ADG2</name>
    <name type="synonym">APL1</name>
    <name type="ordered locus">At5g19220</name>
    <name type="ORF">T24G5.120</name>
</gene>
<evidence type="ECO:0000255" key="1"/>
<evidence type="ECO:0000305" key="2"/>
<evidence type="ECO:0007744" key="3">
    <source>
    </source>
</evidence>
<keyword id="KW-0021">Allosteric enzyme</keyword>
<keyword id="KW-0067">ATP-binding</keyword>
<keyword id="KW-0150">Chloroplast</keyword>
<keyword id="KW-0547">Nucleotide-binding</keyword>
<keyword id="KW-0548">Nucleotidyltransferase</keyword>
<keyword id="KW-0597">Phosphoprotein</keyword>
<keyword id="KW-0934">Plastid</keyword>
<keyword id="KW-1185">Reference proteome</keyword>
<keyword id="KW-0750">Starch biosynthesis</keyword>
<keyword id="KW-0808">Transferase</keyword>
<keyword id="KW-0809">Transit peptide</keyword>
<reference key="1">
    <citation type="journal article" date="1997" name="Plant J.">
        <title>adg2-1 represents a missense mutation in the ADPG pyrophosphorylase large subunit gene of Arabidopsis thaliana.</title>
        <authorList>
            <person name="Wang S.-M."/>
            <person name="Chu B."/>
            <person name="Lue W.-L."/>
            <person name="Yu T.-S."/>
            <person name="Eimert K."/>
            <person name="Chen J."/>
        </authorList>
    </citation>
    <scope>NUCLEOTIDE SEQUENCE [MRNA]</scope>
    <source>
        <strain>cv. Columbia</strain>
        <tissue>Leaf</tissue>
    </source>
</reference>
<reference key="2">
    <citation type="online journal article" date="1999" name="Plant Gene Register">
        <title>The Arabidopsis thaliana ADP glucose pyrophosphorylase large subunit gene, adg2.</title>
        <authorList>
            <person name="Ito H."/>
            <person name="Sokolov L.N."/>
            <person name="Kleczkowski L.A."/>
            <person name="Okita T.W."/>
        </authorList>
        <locator>PGR99-051</locator>
    </citation>
    <scope>NUCLEOTIDE SEQUENCE [GENOMIC DNA]</scope>
    <source>
        <strain>cv. Columbia</strain>
    </source>
</reference>
<reference key="3">
    <citation type="journal article" date="1999" name="Z. Naturforsch. C">
        <title>Molecular cloning and spatial expression of an osmotic-responsive cDNA for the large subunit of ADP-glucose pyrophosphorylase from Arabidopsis thaliana.</title>
        <authorList>
            <person name="Kleczkowski L.A."/>
            <person name="Sokolov L.N."/>
            <person name="Luo C."/>
            <person name="Villand P."/>
        </authorList>
    </citation>
    <scope>NUCLEOTIDE SEQUENCE [MRNA]</scope>
    <source>
        <strain>cv. Columbia</strain>
    </source>
</reference>
<reference key="4">
    <citation type="journal article" date="2000" name="Nature">
        <title>Sequence and analysis of chromosome 5 of the plant Arabidopsis thaliana.</title>
        <authorList>
            <person name="Tabata S."/>
            <person name="Kaneko T."/>
            <person name="Nakamura Y."/>
            <person name="Kotani H."/>
            <person name="Kato T."/>
            <person name="Asamizu E."/>
            <person name="Miyajima N."/>
            <person name="Sasamoto S."/>
            <person name="Kimura T."/>
            <person name="Hosouchi T."/>
            <person name="Kawashima K."/>
            <person name="Kohara M."/>
            <person name="Matsumoto M."/>
            <person name="Matsuno A."/>
            <person name="Muraki A."/>
            <person name="Nakayama S."/>
            <person name="Nakazaki N."/>
            <person name="Naruo K."/>
            <person name="Okumura S."/>
            <person name="Shinpo S."/>
            <person name="Takeuchi C."/>
            <person name="Wada T."/>
            <person name="Watanabe A."/>
            <person name="Yamada M."/>
            <person name="Yasuda M."/>
            <person name="Sato S."/>
            <person name="de la Bastide M."/>
            <person name="Huang E."/>
            <person name="Spiegel L."/>
            <person name="Gnoj L."/>
            <person name="O'Shaughnessy A."/>
            <person name="Preston R."/>
            <person name="Habermann K."/>
            <person name="Murray J."/>
            <person name="Johnson D."/>
            <person name="Rohlfing T."/>
            <person name="Nelson J."/>
            <person name="Stoneking T."/>
            <person name="Pepin K."/>
            <person name="Spieth J."/>
            <person name="Sekhon M."/>
            <person name="Armstrong J."/>
            <person name="Becker M."/>
            <person name="Belter E."/>
            <person name="Cordum H."/>
            <person name="Cordes M."/>
            <person name="Courtney L."/>
            <person name="Courtney W."/>
            <person name="Dante M."/>
            <person name="Du H."/>
            <person name="Edwards J."/>
            <person name="Fryman J."/>
            <person name="Haakensen B."/>
            <person name="Lamar E."/>
            <person name="Latreille P."/>
            <person name="Leonard S."/>
            <person name="Meyer R."/>
            <person name="Mulvaney E."/>
            <person name="Ozersky P."/>
            <person name="Riley A."/>
            <person name="Strowmatt C."/>
            <person name="Wagner-McPherson C."/>
            <person name="Wollam A."/>
            <person name="Yoakum M."/>
            <person name="Bell M."/>
            <person name="Dedhia N."/>
            <person name="Parnell L."/>
            <person name="Shah R."/>
            <person name="Rodriguez M."/>
            <person name="Hoon See L."/>
            <person name="Vil D."/>
            <person name="Baker J."/>
            <person name="Kirchoff K."/>
            <person name="Toth K."/>
            <person name="King L."/>
            <person name="Bahret A."/>
            <person name="Miller B."/>
            <person name="Marra M.A."/>
            <person name="Martienssen R."/>
            <person name="McCombie W.R."/>
            <person name="Wilson R.K."/>
            <person name="Murphy G."/>
            <person name="Bancroft I."/>
            <person name="Volckaert G."/>
            <person name="Wambutt R."/>
            <person name="Duesterhoeft A."/>
            <person name="Stiekema W."/>
            <person name="Pohl T."/>
            <person name="Entian K.-D."/>
            <person name="Terryn N."/>
            <person name="Hartley N."/>
            <person name="Bent E."/>
            <person name="Johnson S."/>
            <person name="Langham S.-A."/>
            <person name="McCullagh B."/>
            <person name="Robben J."/>
            <person name="Grymonprez B."/>
            <person name="Zimmermann W."/>
            <person name="Ramsperger U."/>
            <person name="Wedler H."/>
            <person name="Balke K."/>
            <person name="Wedler E."/>
            <person name="Peters S."/>
            <person name="van Staveren M."/>
            <person name="Dirkse W."/>
            <person name="Mooijman P."/>
            <person name="Klein Lankhorst R."/>
            <person name="Weitzenegger T."/>
            <person name="Bothe G."/>
            <person name="Rose M."/>
            <person name="Hauf J."/>
            <person name="Berneiser S."/>
            <person name="Hempel S."/>
            <person name="Feldpausch M."/>
            <person name="Lamberth S."/>
            <person name="Villarroel R."/>
            <person name="Gielen J."/>
            <person name="Ardiles W."/>
            <person name="Bents O."/>
            <person name="Lemcke K."/>
            <person name="Kolesov G."/>
            <person name="Mayer K.F.X."/>
            <person name="Rudd S."/>
            <person name="Schoof H."/>
            <person name="Schueller C."/>
            <person name="Zaccaria P."/>
            <person name="Mewes H.-W."/>
            <person name="Bevan M."/>
            <person name="Fransz P.F."/>
        </authorList>
    </citation>
    <scope>NUCLEOTIDE SEQUENCE [LARGE SCALE GENOMIC DNA]</scope>
    <source>
        <strain>cv. Columbia</strain>
    </source>
</reference>
<reference key="5">
    <citation type="journal article" date="2017" name="Plant J.">
        <title>Araport11: a complete reannotation of the Arabidopsis thaliana reference genome.</title>
        <authorList>
            <person name="Cheng C.Y."/>
            <person name="Krishnakumar V."/>
            <person name="Chan A.P."/>
            <person name="Thibaud-Nissen F."/>
            <person name="Schobel S."/>
            <person name="Town C.D."/>
        </authorList>
    </citation>
    <scope>GENOME REANNOTATION</scope>
    <source>
        <strain>cv. Columbia</strain>
    </source>
</reference>
<reference key="6">
    <citation type="journal article" date="2003" name="Science">
        <title>Empirical analysis of transcriptional activity in the Arabidopsis genome.</title>
        <authorList>
            <person name="Yamada K."/>
            <person name="Lim J."/>
            <person name="Dale J.M."/>
            <person name="Chen H."/>
            <person name="Shinn P."/>
            <person name="Palm C.J."/>
            <person name="Southwick A.M."/>
            <person name="Wu H.C."/>
            <person name="Kim C.J."/>
            <person name="Nguyen M."/>
            <person name="Pham P.K."/>
            <person name="Cheuk R.F."/>
            <person name="Karlin-Newmann G."/>
            <person name="Liu S.X."/>
            <person name="Lam B."/>
            <person name="Sakano H."/>
            <person name="Wu T."/>
            <person name="Yu G."/>
            <person name="Miranda M."/>
            <person name="Quach H.L."/>
            <person name="Tripp M."/>
            <person name="Chang C.H."/>
            <person name="Lee J.M."/>
            <person name="Toriumi M.J."/>
            <person name="Chan M.M."/>
            <person name="Tang C.C."/>
            <person name="Onodera C.S."/>
            <person name="Deng J.M."/>
            <person name="Akiyama K."/>
            <person name="Ansari Y."/>
            <person name="Arakawa T."/>
            <person name="Banh J."/>
            <person name="Banno F."/>
            <person name="Bowser L."/>
            <person name="Brooks S.Y."/>
            <person name="Carninci P."/>
            <person name="Chao Q."/>
            <person name="Choy N."/>
            <person name="Enju A."/>
            <person name="Goldsmith A.D."/>
            <person name="Gurjal M."/>
            <person name="Hansen N.F."/>
            <person name="Hayashizaki Y."/>
            <person name="Johnson-Hopson C."/>
            <person name="Hsuan V.W."/>
            <person name="Iida K."/>
            <person name="Karnes M."/>
            <person name="Khan S."/>
            <person name="Koesema E."/>
            <person name="Ishida J."/>
            <person name="Jiang P.X."/>
            <person name="Jones T."/>
            <person name="Kawai J."/>
            <person name="Kamiya A."/>
            <person name="Meyers C."/>
            <person name="Nakajima M."/>
            <person name="Narusaka M."/>
            <person name="Seki M."/>
            <person name="Sakurai T."/>
            <person name="Satou M."/>
            <person name="Tamse R."/>
            <person name="Vaysberg M."/>
            <person name="Wallender E.K."/>
            <person name="Wong C."/>
            <person name="Yamamura Y."/>
            <person name="Yuan S."/>
            <person name="Shinozaki K."/>
            <person name="Davis R.W."/>
            <person name="Theologis A."/>
            <person name="Ecker J.R."/>
        </authorList>
    </citation>
    <scope>NUCLEOTIDE SEQUENCE [LARGE SCALE MRNA]</scope>
    <source>
        <strain>cv. Columbia</strain>
    </source>
</reference>
<reference key="7">
    <citation type="journal article" date="1993" name="Plant Mol. Biol.">
        <title>Molecular characterization of multiple cDNA clones for ADP-glucose pyrophosphorylase from Arabidopsis thaliana.</title>
        <authorList>
            <person name="Villand P."/>
            <person name="Olsen O.-A."/>
            <person name="Kleczkowski L.A."/>
        </authorList>
    </citation>
    <scope>PRELIMINARY NUCLEOTIDE SEQUENCE [MRNA] OF 297-480</scope>
    <source>
        <strain>cv. Columbia</strain>
    </source>
</reference>
<reference key="8">
    <citation type="journal article" date="2009" name="Plant Physiol.">
        <title>Large-scale Arabidopsis phosphoproteome profiling reveals novel chloroplast kinase substrates and phosphorylation networks.</title>
        <authorList>
            <person name="Reiland S."/>
            <person name="Messerli G."/>
            <person name="Baerenfaller K."/>
            <person name="Gerrits B."/>
            <person name="Endler A."/>
            <person name="Grossmann J."/>
            <person name="Gruissem W."/>
            <person name="Baginsky S."/>
        </authorList>
    </citation>
    <scope>PHOSPHORYLATION [LARGE SCALE ANALYSIS] AT SER-428</scope>
    <scope>IDENTIFICATION BY MASS SPECTROMETRY [LARGE SCALE ANALYSIS]</scope>
</reference>
<accession>P55229</accession>
<accession>O04929</accession>
<accession>Q9SXS1</accession>
<dbReference type="EC" id="2.7.7.27"/>
<dbReference type="EMBL" id="U72290">
    <property type="protein sequence ID" value="AAB58475.1"/>
    <property type="molecule type" value="mRNA"/>
</dbReference>
<dbReference type="EMBL" id="AB022891">
    <property type="protein sequence ID" value="BAA76362.1"/>
    <property type="molecule type" value="Genomic_DNA"/>
</dbReference>
<dbReference type="EMBL" id="X73367">
    <property type="protein sequence ID" value="CAA51779.2"/>
    <property type="molecule type" value="mRNA"/>
</dbReference>
<dbReference type="EMBL" id="AC069326">
    <property type="status" value="NOT_ANNOTATED_CDS"/>
    <property type="molecule type" value="Genomic_DNA"/>
</dbReference>
<dbReference type="EMBL" id="CP002688">
    <property type="protein sequence ID" value="AED92672.1"/>
    <property type="molecule type" value="Genomic_DNA"/>
</dbReference>
<dbReference type="EMBL" id="BT008884">
    <property type="protein sequence ID" value="AAP68323.1"/>
    <property type="molecule type" value="mRNA"/>
</dbReference>
<dbReference type="EMBL" id="AF370503">
    <property type="protein sequence ID" value="AAK43880.1"/>
    <property type="molecule type" value="mRNA"/>
</dbReference>
<dbReference type="PIR" id="S42548">
    <property type="entry name" value="S42548"/>
</dbReference>
<dbReference type="PIR" id="T52629">
    <property type="entry name" value="T52629"/>
</dbReference>
<dbReference type="RefSeq" id="NP_197423.1">
    <property type="nucleotide sequence ID" value="NM_121927.3"/>
</dbReference>
<dbReference type="SMR" id="P55229"/>
<dbReference type="BioGRID" id="17318">
    <property type="interactions" value="3"/>
</dbReference>
<dbReference type="FunCoup" id="P55229">
    <property type="interactions" value="1094"/>
</dbReference>
<dbReference type="STRING" id="3702.P55229"/>
<dbReference type="iPTMnet" id="P55229"/>
<dbReference type="PaxDb" id="3702-AT5G19220.1"/>
<dbReference type="ProteomicsDB" id="221896"/>
<dbReference type="EnsemblPlants" id="AT5G19220.1">
    <property type="protein sequence ID" value="AT5G19220.1"/>
    <property type="gene ID" value="AT5G19220"/>
</dbReference>
<dbReference type="GeneID" id="832042"/>
<dbReference type="Gramene" id="AT5G19220.1">
    <property type="protein sequence ID" value="AT5G19220.1"/>
    <property type="gene ID" value="AT5G19220"/>
</dbReference>
<dbReference type="KEGG" id="ath:AT5G19220"/>
<dbReference type="Araport" id="AT5G19220"/>
<dbReference type="TAIR" id="AT5G19220">
    <property type="gene designation" value="APL1"/>
</dbReference>
<dbReference type="eggNOG" id="KOG1322">
    <property type="taxonomic scope" value="Eukaryota"/>
</dbReference>
<dbReference type="HOGENOM" id="CLU_029499_14_4_1"/>
<dbReference type="InParanoid" id="P55229"/>
<dbReference type="OMA" id="YRMDFSQ"/>
<dbReference type="PhylomeDB" id="P55229"/>
<dbReference type="BioCyc" id="ARA:AT5G19220-MONOMER"/>
<dbReference type="BioCyc" id="MetaCyc:MONOMER-1823"/>
<dbReference type="BRENDA" id="2.7.7.27">
    <property type="organism ID" value="399"/>
</dbReference>
<dbReference type="SABIO-RK" id="P55229"/>
<dbReference type="UniPathway" id="UPA00152"/>
<dbReference type="PRO" id="PR:P55229"/>
<dbReference type="Proteomes" id="UP000006548">
    <property type="component" value="Chromosome 5"/>
</dbReference>
<dbReference type="ExpressionAtlas" id="P55229">
    <property type="expression patterns" value="baseline and differential"/>
</dbReference>
<dbReference type="GO" id="GO:0009507">
    <property type="term" value="C:chloroplast"/>
    <property type="evidence" value="ECO:0007005"/>
    <property type="project" value="TAIR"/>
</dbReference>
<dbReference type="GO" id="GO:0009941">
    <property type="term" value="C:chloroplast envelope"/>
    <property type="evidence" value="ECO:0007005"/>
    <property type="project" value="TAIR"/>
</dbReference>
<dbReference type="GO" id="GO:0009570">
    <property type="term" value="C:chloroplast stroma"/>
    <property type="evidence" value="ECO:0007005"/>
    <property type="project" value="TAIR"/>
</dbReference>
<dbReference type="GO" id="GO:0005524">
    <property type="term" value="F:ATP binding"/>
    <property type="evidence" value="ECO:0007669"/>
    <property type="project" value="UniProtKB-KW"/>
</dbReference>
<dbReference type="GO" id="GO:0008878">
    <property type="term" value="F:glucose-1-phosphate adenylyltransferase activity"/>
    <property type="evidence" value="ECO:0000314"/>
    <property type="project" value="TAIR"/>
</dbReference>
<dbReference type="GO" id="GO:0005978">
    <property type="term" value="P:glycogen biosynthetic process"/>
    <property type="evidence" value="ECO:0007669"/>
    <property type="project" value="InterPro"/>
</dbReference>
<dbReference type="GO" id="GO:0019252">
    <property type="term" value="P:starch biosynthetic process"/>
    <property type="evidence" value="ECO:0007669"/>
    <property type="project" value="UniProtKB-UniPathway"/>
</dbReference>
<dbReference type="CDD" id="cd02508">
    <property type="entry name" value="ADP_Glucose_PP"/>
    <property type="match status" value="1"/>
</dbReference>
<dbReference type="CDD" id="cd04651">
    <property type="entry name" value="LbH_G1P_AT_C"/>
    <property type="match status" value="1"/>
</dbReference>
<dbReference type="FunFam" id="2.160.10.10:FF:000010">
    <property type="entry name" value="Glucose-1-phosphate adenylyltransferase"/>
    <property type="match status" value="1"/>
</dbReference>
<dbReference type="FunFam" id="3.90.550.10:FF:000030">
    <property type="entry name" value="Glucose-1-phosphate adenylyltransferase"/>
    <property type="match status" value="1"/>
</dbReference>
<dbReference type="Gene3D" id="2.160.10.10">
    <property type="entry name" value="Hexapeptide repeat proteins"/>
    <property type="match status" value="1"/>
</dbReference>
<dbReference type="Gene3D" id="3.90.550.10">
    <property type="entry name" value="Spore Coat Polysaccharide Biosynthesis Protein SpsA, Chain A"/>
    <property type="match status" value="1"/>
</dbReference>
<dbReference type="InterPro" id="IPR011831">
    <property type="entry name" value="ADP-Glc_PPase"/>
</dbReference>
<dbReference type="InterPro" id="IPR005836">
    <property type="entry name" value="ADP_Glu_pyroP_CS"/>
</dbReference>
<dbReference type="InterPro" id="IPR005835">
    <property type="entry name" value="NTP_transferase_dom"/>
</dbReference>
<dbReference type="InterPro" id="IPR029044">
    <property type="entry name" value="Nucleotide-diphossugar_trans"/>
</dbReference>
<dbReference type="InterPro" id="IPR011004">
    <property type="entry name" value="Trimer_LpxA-like_sf"/>
</dbReference>
<dbReference type="NCBIfam" id="TIGR02091">
    <property type="entry name" value="glgC"/>
    <property type="match status" value="1"/>
</dbReference>
<dbReference type="NCBIfam" id="NF002772">
    <property type="entry name" value="PRK02862.1"/>
    <property type="match status" value="1"/>
</dbReference>
<dbReference type="PANTHER" id="PTHR43523:SF12">
    <property type="entry name" value="GLUCOSE-1-PHOSPHATE ADENYLYLTRANSFERASE LARGE SUBUNIT 1, CHLOROPLASTIC-RELATED"/>
    <property type="match status" value="1"/>
</dbReference>
<dbReference type="PANTHER" id="PTHR43523">
    <property type="entry name" value="GLUCOSE-1-PHOSPHATE ADENYLYLTRANSFERASE-RELATED"/>
    <property type="match status" value="1"/>
</dbReference>
<dbReference type="Pfam" id="PF25247">
    <property type="entry name" value="LbH_GLGC"/>
    <property type="match status" value="1"/>
</dbReference>
<dbReference type="Pfam" id="PF00483">
    <property type="entry name" value="NTP_transferase"/>
    <property type="match status" value="1"/>
</dbReference>
<dbReference type="SUPFAM" id="SSF53448">
    <property type="entry name" value="Nucleotide-diphospho-sugar transferases"/>
    <property type="match status" value="1"/>
</dbReference>
<dbReference type="SUPFAM" id="SSF51161">
    <property type="entry name" value="Trimeric LpxA-like enzymes"/>
    <property type="match status" value="1"/>
</dbReference>
<dbReference type="PROSITE" id="PS00808">
    <property type="entry name" value="ADP_GLC_PYROPHOSPH_1"/>
    <property type="match status" value="1"/>
</dbReference>
<dbReference type="PROSITE" id="PS00809">
    <property type="entry name" value="ADP_GLC_PYROPHOSPH_2"/>
    <property type="match status" value="1"/>
</dbReference>
<dbReference type="PROSITE" id="PS00810">
    <property type="entry name" value="ADP_GLC_PYROPHOSPH_3"/>
    <property type="match status" value="1"/>
</dbReference>